<gene>
    <name evidence="1" type="primary">lepA</name>
    <name type="ordered locus">TPASS_0510</name>
</gene>
<keyword id="KW-0997">Cell inner membrane</keyword>
<keyword id="KW-1003">Cell membrane</keyword>
<keyword id="KW-0342">GTP-binding</keyword>
<keyword id="KW-0378">Hydrolase</keyword>
<keyword id="KW-0472">Membrane</keyword>
<keyword id="KW-0547">Nucleotide-binding</keyword>
<keyword id="KW-0648">Protein biosynthesis</keyword>
<proteinExistence type="inferred from homology"/>
<reference key="1">
    <citation type="journal article" date="2008" name="BMC Microbiol.">
        <title>Complete genome sequence of Treponema pallidum ssp. pallidum strain SS14 determined with oligonucleotide arrays.</title>
        <authorList>
            <person name="Matejkova P."/>
            <person name="Strouhal M."/>
            <person name="Smajs D."/>
            <person name="Norris S.J."/>
            <person name="Palzkill T."/>
            <person name="Petrosino J.F."/>
            <person name="Sodergren E."/>
            <person name="Norton J.E."/>
            <person name="Singh J."/>
            <person name="Richmond T.A."/>
            <person name="Molla M.N."/>
            <person name="Albert T.J."/>
            <person name="Weinstock G.M."/>
        </authorList>
    </citation>
    <scope>NUCLEOTIDE SEQUENCE [LARGE SCALE GENOMIC DNA]</scope>
    <source>
        <strain>SS14</strain>
    </source>
</reference>
<comment type="function">
    <text evidence="1">Required for accurate and efficient protein synthesis under certain stress conditions. May act as a fidelity factor of the translation reaction, by catalyzing a one-codon backward translocation of tRNAs on improperly translocated ribosomes. Back-translocation proceeds from a post-translocation (POST) complex to a pre-translocation (PRE) complex, thus giving elongation factor G a second chance to translocate the tRNAs correctly. Binds to ribosomes in a GTP-dependent manner.</text>
</comment>
<comment type="catalytic activity">
    <reaction evidence="1">
        <text>GTP + H2O = GDP + phosphate + H(+)</text>
        <dbReference type="Rhea" id="RHEA:19669"/>
        <dbReference type="ChEBI" id="CHEBI:15377"/>
        <dbReference type="ChEBI" id="CHEBI:15378"/>
        <dbReference type="ChEBI" id="CHEBI:37565"/>
        <dbReference type="ChEBI" id="CHEBI:43474"/>
        <dbReference type="ChEBI" id="CHEBI:58189"/>
        <dbReference type="EC" id="3.6.5.n1"/>
    </reaction>
</comment>
<comment type="subcellular location">
    <subcellularLocation>
        <location evidence="1">Cell inner membrane</location>
        <topology evidence="1">Peripheral membrane protein</topology>
        <orientation evidence="1">Cytoplasmic side</orientation>
    </subcellularLocation>
</comment>
<comment type="similarity">
    <text evidence="1">Belongs to the TRAFAC class translation factor GTPase superfamily. Classic translation factor GTPase family. LepA subfamily.</text>
</comment>
<accession>B2S3A4</accession>
<evidence type="ECO:0000255" key="1">
    <source>
        <dbReference type="HAMAP-Rule" id="MF_00071"/>
    </source>
</evidence>
<organism>
    <name type="scientific">Treponema pallidum subsp. pallidum (strain SS14)</name>
    <dbReference type="NCBI Taxonomy" id="455434"/>
    <lineage>
        <taxon>Bacteria</taxon>
        <taxon>Pseudomonadati</taxon>
        <taxon>Spirochaetota</taxon>
        <taxon>Spirochaetia</taxon>
        <taxon>Spirochaetales</taxon>
        <taxon>Treponemataceae</taxon>
        <taxon>Treponema</taxon>
    </lineage>
</organism>
<protein>
    <recommendedName>
        <fullName evidence="1">Elongation factor 4</fullName>
        <shortName evidence="1">EF-4</shortName>
        <ecNumber evidence="1">3.6.5.n1</ecNumber>
    </recommendedName>
    <alternativeName>
        <fullName evidence="1">Ribosomal back-translocase LepA</fullName>
    </alternativeName>
</protein>
<feature type="chain" id="PRO_1000092458" description="Elongation factor 4">
    <location>
        <begin position="1"/>
        <end position="605"/>
    </location>
</feature>
<feature type="domain" description="tr-type G">
    <location>
        <begin position="8"/>
        <end position="190"/>
    </location>
</feature>
<feature type="binding site" evidence="1">
    <location>
        <begin position="20"/>
        <end position="25"/>
    </location>
    <ligand>
        <name>GTP</name>
        <dbReference type="ChEBI" id="CHEBI:37565"/>
    </ligand>
</feature>
<feature type="binding site" evidence="1">
    <location>
        <begin position="137"/>
        <end position="140"/>
    </location>
    <ligand>
        <name>GTP</name>
        <dbReference type="ChEBI" id="CHEBI:37565"/>
    </ligand>
</feature>
<sequence>MRAMACVRRVRNFCIVAHIDHGKSTLADRLIERTRAVEERLQHAQMTDNMELERERGITIKSHAVCIPYTDAHGTEYVLNFVDTPGHADFAYEVSRAIAACEGALLVVDATQGVESQTISNLYLVLEHNLEIIPVINKIDLPTADVPRVLQQVEHDLGLDPASSVLISAKTGENVDALFDAIITRIPPPQGSGTAALQALVFDCHYDQYRGVVVHIRVFEGQVTSGMVIRFMSNGAEYRVEETGVFVFNLIAREALCAGDVGYLSANVKTVSDVQVGDTITDASCPCDTPRAGFRRVKPVVFSSVYPVDTDECEQLREALERLALNDASISWERDSSLALGHGFRCGFLGLLHLEVVQQRLEREFNQTVIFTAPQVQYYVFLKTGQRIVCDNPAHYPLEQEIAQVHEPYIRATIITPTEVLGAVMTLCIEKRAYQTAVNYLDQKRVELVYEMPLAEILFGFYDRLKSISHGYASFDYELIESKLTDLVKVDILINGKPVDALAQLCYRPHARRRAQAVCARLKEEISRQQFKIAIQGSIGGQIISRETVSPFRKDVLAKCYGGDITRKRKLLEKQKEGKKRMKMVGDVEIPQTAFLSVLKEASDA</sequence>
<dbReference type="EC" id="3.6.5.n1" evidence="1"/>
<dbReference type="EMBL" id="CP000805">
    <property type="protein sequence ID" value="ACD70933.1"/>
    <property type="molecule type" value="Genomic_DNA"/>
</dbReference>
<dbReference type="RefSeq" id="WP_010881959.1">
    <property type="nucleotide sequence ID" value="NC_021508.1"/>
</dbReference>
<dbReference type="SMR" id="B2S3A4"/>
<dbReference type="GeneID" id="93876279"/>
<dbReference type="KEGG" id="tpp:TPASS_0510"/>
<dbReference type="PATRIC" id="fig|455434.6.peg.507"/>
<dbReference type="Proteomes" id="UP000001202">
    <property type="component" value="Chromosome"/>
</dbReference>
<dbReference type="GO" id="GO:0005886">
    <property type="term" value="C:plasma membrane"/>
    <property type="evidence" value="ECO:0007669"/>
    <property type="project" value="UniProtKB-SubCell"/>
</dbReference>
<dbReference type="GO" id="GO:0005525">
    <property type="term" value="F:GTP binding"/>
    <property type="evidence" value="ECO:0007669"/>
    <property type="project" value="UniProtKB-UniRule"/>
</dbReference>
<dbReference type="GO" id="GO:0003924">
    <property type="term" value="F:GTPase activity"/>
    <property type="evidence" value="ECO:0007669"/>
    <property type="project" value="UniProtKB-UniRule"/>
</dbReference>
<dbReference type="GO" id="GO:0043022">
    <property type="term" value="F:ribosome binding"/>
    <property type="evidence" value="ECO:0007669"/>
    <property type="project" value="UniProtKB-UniRule"/>
</dbReference>
<dbReference type="GO" id="GO:0003746">
    <property type="term" value="F:translation elongation factor activity"/>
    <property type="evidence" value="ECO:0007669"/>
    <property type="project" value="UniProtKB-UniRule"/>
</dbReference>
<dbReference type="GO" id="GO:0045727">
    <property type="term" value="P:positive regulation of translation"/>
    <property type="evidence" value="ECO:0007669"/>
    <property type="project" value="UniProtKB-UniRule"/>
</dbReference>
<dbReference type="CDD" id="cd03699">
    <property type="entry name" value="EF4_II"/>
    <property type="match status" value="1"/>
</dbReference>
<dbReference type="CDD" id="cd16260">
    <property type="entry name" value="EF4_III"/>
    <property type="match status" value="1"/>
</dbReference>
<dbReference type="CDD" id="cd01890">
    <property type="entry name" value="LepA"/>
    <property type="match status" value="1"/>
</dbReference>
<dbReference type="CDD" id="cd03709">
    <property type="entry name" value="lepA_C"/>
    <property type="match status" value="1"/>
</dbReference>
<dbReference type="FunFam" id="3.40.50.300:FF:000078">
    <property type="entry name" value="Elongation factor 4"/>
    <property type="match status" value="1"/>
</dbReference>
<dbReference type="FunFam" id="2.40.30.10:FF:000015">
    <property type="entry name" value="Translation factor GUF1, mitochondrial"/>
    <property type="match status" value="1"/>
</dbReference>
<dbReference type="FunFam" id="3.30.70.240:FF:000007">
    <property type="entry name" value="Translation factor GUF1, mitochondrial"/>
    <property type="match status" value="1"/>
</dbReference>
<dbReference type="FunFam" id="3.30.70.2570:FF:000001">
    <property type="entry name" value="Translation factor GUF1, mitochondrial"/>
    <property type="match status" value="1"/>
</dbReference>
<dbReference type="FunFam" id="3.30.70.870:FF:000004">
    <property type="entry name" value="Translation factor GUF1, mitochondrial"/>
    <property type="match status" value="1"/>
</dbReference>
<dbReference type="Gene3D" id="3.30.70.240">
    <property type="match status" value="1"/>
</dbReference>
<dbReference type="Gene3D" id="3.30.70.2570">
    <property type="entry name" value="Elongation factor 4, C-terminal domain"/>
    <property type="match status" value="1"/>
</dbReference>
<dbReference type="Gene3D" id="3.30.70.870">
    <property type="entry name" value="Elongation Factor G (Translational Gtpase), domain 3"/>
    <property type="match status" value="1"/>
</dbReference>
<dbReference type="Gene3D" id="3.40.50.300">
    <property type="entry name" value="P-loop containing nucleotide triphosphate hydrolases"/>
    <property type="match status" value="1"/>
</dbReference>
<dbReference type="Gene3D" id="2.40.30.10">
    <property type="entry name" value="Translation factors"/>
    <property type="match status" value="1"/>
</dbReference>
<dbReference type="HAMAP" id="MF_00071">
    <property type="entry name" value="LepA"/>
    <property type="match status" value="1"/>
</dbReference>
<dbReference type="InterPro" id="IPR006297">
    <property type="entry name" value="EF-4"/>
</dbReference>
<dbReference type="InterPro" id="IPR041095">
    <property type="entry name" value="EFG_II"/>
</dbReference>
<dbReference type="InterPro" id="IPR035647">
    <property type="entry name" value="EFG_III/V"/>
</dbReference>
<dbReference type="InterPro" id="IPR000640">
    <property type="entry name" value="EFG_V-like"/>
</dbReference>
<dbReference type="InterPro" id="IPR004161">
    <property type="entry name" value="EFTu-like_2"/>
</dbReference>
<dbReference type="InterPro" id="IPR038363">
    <property type="entry name" value="LepA_C_sf"/>
</dbReference>
<dbReference type="InterPro" id="IPR013842">
    <property type="entry name" value="LepA_CTD"/>
</dbReference>
<dbReference type="InterPro" id="IPR035654">
    <property type="entry name" value="LepA_IV"/>
</dbReference>
<dbReference type="InterPro" id="IPR027417">
    <property type="entry name" value="P-loop_NTPase"/>
</dbReference>
<dbReference type="InterPro" id="IPR005225">
    <property type="entry name" value="Small_GTP-bd"/>
</dbReference>
<dbReference type="InterPro" id="IPR000795">
    <property type="entry name" value="T_Tr_GTP-bd_dom"/>
</dbReference>
<dbReference type="InterPro" id="IPR009000">
    <property type="entry name" value="Transl_B-barrel_sf"/>
</dbReference>
<dbReference type="NCBIfam" id="TIGR01393">
    <property type="entry name" value="lepA"/>
    <property type="match status" value="1"/>
</dbReference>
<dbReference type="NCBIfam" id="TIGR00231">
    <property type="entry name" value="small_GTP"/>
    <property type="match status" value="1"/>
</dbReference>
<dbReference type="PANTHER" id="PTHR43512:SF4">
    <property type="entry name" value="TRANSLATION FACTOR GUF1 HOMOLOG, CHLOROPLASTIC"/>
    <property type="match status" value="1"/>
</dbReference>
<dbReference type="PANTHER" id="PTHR43512">
    <property type="entry name" value="TRANSLATION FACTOR GUF1-RELATED"/>
    <property type="match status" value="1"/>
</dbReference>
<dbReference type="Pfam" id="PF00679">
    <property type="entry name" value="EFG_C"/>
    <property type="match status" value="1"/>
</dbReference>
<dbReference type="Pfam" id="PF14492">
    <property type="entry name" value="EFG_III"/>
    <property type="match status" value="1"/>
</dbReference>
<dbReference type="Pfam" id="PF00009">
    <property type="entry name" value="GTP_EFTU"/>
    <property type="match status" value="1"/>
</dbReference>
<dbReference type="Pfam" id="PF03144">
    <property type="entry name" value="GTP_EFTU_D2"/>
    <property type="match status" value="1"/>
</dbReference>
<dbReference type="Pfam" id="PF06421">
    <property type="entry name" value="LepA_C"/>
    <property type="match status" value="1"/>
</dbReference>
<dbReference type="PRINTS" id="PR00315">
    <property type="entry name" value="ELONGATNFCT"/>
</dbReference>
<dbReference type="SUPFAM" id="SSF54980">
    <property type="entry name" value="EF-G C-terminal domain-like"/>
    <property type="match status" value="2"/>
</dbReference>
<dbReference type="SUPFAM" id="SSF52540">
    <property type="entry name" value="P-loop containing nucleoside triphosphate hydrolases"/>
    <property type="match status" value="1"/>
</dbReference>
<dbReference type="SUPFAM" id="SSF50447">
    <property type="entry name" value="Translation proteins"/>
    <property type="match status" value="1"/>
</dbReference>
<dbReference type="PROSITE" id="PS51722">
    <property type="entry name" value="G_TR_2"/>
    <property type="match status" value="1"/>
</dbReference>
<name>LEPA_TREPS</name>